<reference key="1">
    <citation type="submission" date="2006-01" db="EMBL/GenBank/DDBJ databases">
        <title>A comparison of the first two published chloroplast genomes in Asteraceae: Lactuca and Helianthus.</title>
        <authorList>
            <person name="Timme R.E."/>
            <person name="Kuehl J.V."/>
            <person name="Boore J.L."/>
            <person name="Jansen R.K."/>
        </authorList>
    </citation>
    <scope>NUCLEOTIDE SEQUENCE [LARGE SCALE GENOMIC DNA]</scope>
    <source>
        <strain>cv. HA383</strain>
    </source>
</reference>
<accession>Q1KXV2</accession>
<organism>
    <name type="scientific">Helianthus annuus</name>
    <name type="common">Common sunflower</name>
    <dbReference type="NCBI Taxonomy" id="4232"/>
    <lineage>
        <taxon>Eukaryota</taxon>
        <taxon>Viridiplantae</taxon>
        <taxon>Streptophyta</taxon>
        <taxon>Embryophyta</taxon>
        <taxon>Tracheophyta</taxon>
        <taxon>Spermatophyta</taxon>
        <taxon>Magnoliopsida</taxon>
        <taxon>eudicotyledons</taxon>
        <taxon>Gunneridae</taxon>
        <taxon>Pentapetalae</taxon>
        <taxon>asterids</taxon>
        <taxon>campanulids</taxon>
        <taxon>Asterales</taxon>
        <taxon>Asteraceae</taxon>
        <taxon>Asteroideae</taxon>
        <taxon>Heliantheae alliance</taxon>
        <taxon>Heliantheae</taxon>
        <taxon>Helianthus</taxon>
    </lineage>
</organism>
<sequence>MRMNPTTSSSGVATLDKKNLGRIAQIIGPVLDVAFPPGKMPNIYNALVVKGRDTVGQPINVTCEVQQLLGNNRVRAVAMSATDGLTRGMDVIDTGAPLSVPVGGATLGRIFNVLGEPIDNLGPVDNSTTFPIHRSAPAFIQLDTKLSIFETGIKVVDLLAPYRRGGKIGLFGGAGVGKTVLIMELINNIAKAHGGVSVFGGVGERTREGNDLYMEMKESGVINEQNIAESKVALVYGQMNEPPGARMRVGLTALTMAEYFRDVNEQDVLLFVDNIFRFVQAGSEVSALLGRMPSAVGYQPTLSTEMGSLQERITSTKEGSITSIQAVYVPADDLTDPAPATTFAHLDATTVLSRGLAAKGIYPAVDPLDSTSTMLQPRIVGDEHYETAQQVKQTLQRYKELQDIIAILGLDELSEEDRLTVARARKIERFLSQPFFVAEVFTGSPGKYVGLAETIRGFQLILSGELDGLPEQAFYLVGNIDEATAKAMNLEMESNSKK</sequence>
<comment type="function">
    <text evidence="1">Produces ATP from ADP in the presence of a proton gradient across the membrane. The catalytic sites are hosted primarily by the beta subunits.</text>
</comment>
<comment type="catalytic activity">
    <reaction evidence="1">
        <text>ATP + H2O + 4 H(+)(in) = ADP + phosphate + 5 H(+)(out)</text>
        <dbReference type="Rhea" id="RHEA:57720"/>
        <dbReference type="ChEBI" id="CHEBI:15377"/>
        <dbReference type="ChEBI" id="CHEBI:15378"/>
        <dbReference type="ChEBI" id="CHEBI:30616"/>
        <dbReference type="ChEBI" id="CHEBI:43474"/>
        <dbReference type="ChEBI" id="CHEBI:456216"/>
        <dbReference type="EC" id="7.1.2.2"/>
    </reaction>
</comment>
<comment type="subunit">
    <text evidence="1">F-type ATPases have 2 components, CF(1) - the catalytic core - and CF(0) - the membrane proton channel. CF(1) has five subunits: alpha(3), beta(3), gamma(1), delta(1), epsilon(1). CF(0) has four main subunits: a(1), b(1), b'(1) and c(9-12).</text>
</comment>
<comment type="subcellular location">
    <subcellularLocation>
        <location evidence="1">Plastid</location>
        <location evidence="1">Chloroplast thylakoid membrane</location>
        <topology evidence="1">Peripheral membrane protein</topology>
    </subcellularLocation>
</comment>
<comment type="similarity">
    <text evidence="1">Belongs to the ATPase alpha/beta chains family.</text>
</comment>
<protein>
    <recommendedName>
        <fullName evidence="1">ATP synthase subunit beta, chloroplastic</fullName>
        <ecNumber evidence="1">7.1.2.2</ecNumber>
    </recommendedName>
    <alternativeName>
        <fullName evidence="1">ATP synthase F1 sector subunit beta</fullName>
    </alternativeName>
    <alternativeName>
        <fullName evidence="1">F-ATPase subunit beta</fullName>
    </alternativeName>
</protein>
<dbReference type="EC" id="7.1.2.2" evidence="1"/>
<dbReference type="EMBL" id="DQ383815">
    <property type="protein sequence ID" value="ABD47153.1"/>
    <property type="molecule type" value="Genomic_DNA"/>
</dbReference>
<dbReference type="RefSeq" id="YP_588124.1">
    <property type="nucleotide sequence ID" value="NC_007977.1"/>
</dbReference>
<dbReference type="SMR" id="Q1KXV2"/>
<dbReference type="EnsemblPlants" id="mRNA:HanXRQr2_Chr02g0061551">
    <property type="protein sequence ID" value="CDS:HanXRQr2_Chr02g0061551.1"/>
    <property type="gene ID" value="HanXRQr2_Chr02g0061551"/>
</dbReference>
<dbReference type="GeneID" id="4055708"/>
<dbReference type="Gramene" id="mRNA:HanXRQr2_Chr02g0061551">
    <property type="protein sequence ID" value="CDS:HanXRQr2_Chr02g0061551.1"/>
    <property type="gene ID" value="HanXRQr2_Chr02g0061551"/>
</dbReference>
<dbReference type="KEGG" id="han:4055708"/>
<dbReference type="OrthoDB" id="1562023at2759"/>
<dbReference type="PhylomeDB" id="Q1KXV2"/>
<dbReference type="GO" id="GO:0009535">
    <property type="term" value="C:chloroplast thylakoid membrane"/>
    <property type="evidence" value="ECO:0007669"/>
    <property type="project" value="UniProtKB-SubCell"/>
</dbReference>
<dbReference type="GO" id="GO:0045259">
    <property type="term" value="C:proton-transporting ATP synthase complex"/>
    <property type="evidence" value="ECO:0007669"/>
    <property type="project" value="UniProtKB-KW"/>
</dbReference>
<dbReference type="GO" id="GO:0005524">
    <property type="term" value="F:ATP binding"/>
    <property type="evidence" value="ECO:0007669"/>
    <property type="project" value="UniProtKB-UniRule"/>
</dbReference>
<dbReference type="GO" id="GO:0016887">
    <property type="term" value="F:ATP hydrolysis activity"/>
    <property type="evidence" value="ECO:0007669"/>
    <property type="project" value="InterPro"/>
</dbReference>
<dbReference type="GO" id="GO:0046933">
    <property type="term" value="F:proton-transporting ATP synthase activity, rotational mechanism"/>
    <property type="evidence" value="ECO:0007669"/>
    <property type="project" value="UniProtKB-UniRule"/>
</dbReference>
<dbReference type="CDD" id="cd18110">
    <property type="entry name" value="ATP-synt_F1_beta_C"/>
    <property type="match status" value="1"/>
</dbReference>
<dbReference type="CDD" id="cd18115">
    <property type="entry name" value="ATP-synt_F1_beta_N"/>
    <property type="match status" value="1"/>
</dbReference>
<dbReference type="CDD" id="cd01133">
    <property type="entry name" value="F1-ATPase_beta_CD"/>
    <property type="match status" value="1"/>
</dbReference>
<dbReference type="FunFam" id="1.10.1140.10:FF:000001">
    <property type="entry name" value="ATP synthase subunit beta"/>
    <property type="match status" value="1"/>
</dbReference>
<dbReference type="FunFam" id="3.40.50.300:FF:000004">
    <property type="entry name" value="ATP synthase subunit beta"/>
    <property type="match status" value="1"/>
</dbReference>
<dbReference type="FunFam" id="2.40.10.170:FF:000002">
    <property type="entry name" value="ATP synthase subunit beta, chloroplastic"/>
    <property type="match status" value="1"/>
</dbReference>
<dbReference type="Gene3D" id="2.40.10.170">
    <property type="match status" value="1"/>
</dbReference>
<dbReference type="Gene3D" id="1.10.1140.10">
    <property type="entry name" value="Bovine Mitochondrial F1-atpase, Atp Synthase Beta Chain, Chain D, domain 3"/>
    <property type="match status" value="1"/>
</dbReference>
<dbReference type="Gene3D" id="3.40.50.300">
    <property type="entry name" value="P-loop containing nucleotide triphosphate hydrolases"/>
    <property type="match status" value="1"/>
</dbReference>
<dbReference type="HAMAP" id="MF_01347">
    <property type="entry name" value="ATP_synth_beta_bact"/>
    <property type="match status" value="1"/>
</dbReference>
<dbReference type="InterPro" id="IPR003593">
    <property type="entry name" value="AAA+_ATPase"/>
</dbReference>
<dbReference type="InterPro" id="IPR055190">
    <property type="entry name" value="ATP-synt_VA_C"/>
</dbReference>
<dbReference type="InterPro" id="IPR005722">
    <property type="entry name" value="ATP_synth_F1_bsu"/>
</dbReference>
<dbReference type="InterPro" id="IPR020003">
    <property type="entry name" value="ATPase_a/bsu_AS"/>
</dbReference>
<dbReference type="InterPro" id="IPR050053">
    <property type="entry name" value="ATPase_alpha/beta_chains"/>
</dbReference>
<dbReference type="InterPro" id="IPR004100">
    <property type="entry name" value="ATPase_F1/V1/A1_a/bsu_N"/>
</dbReference>
<dbReference type="InterPro" id="IPR036121">
    <property type="entry name" value="ATPase_F1/V1/A1_a/bsu_N_sf"/>
</dbReference>
<dbReference type="InterPro" id="IPR000194">
    <property type="entry name" value="ATPase_F1/V1/A1_a/bsu_nucl-bd"/>
</dbReference>
<dbReference type="InterPro" id="IPR024034">
    <property type="entry name" value="ATPase_F1/V1_b/a_C"/>
</dbReference>
<dbReference type="InterPro" id="IPR027417">
    <property type="entry name" value="P-loop_NTPase"/>
</dbReference>
<dbReference type="NCBIfam" id="TIGR01039">
    <property type="entry name" value="atpD"/>
    <property type="match status" value="1"/>
</dbReference>
<dbReference type="PANTHER" id="PTHR15184">
    <property type="entry name" value="ATP SYNTHASE"/>
    <property type="match status" value="1"/>
</dbReference>
<dbReference type="PANTHER" id="PTHR15184:SF76">
    <property type="entry name" value="ATP SYNTHASE SUBUNIT BETA, CHLOROPLASTIC"/>
    <property type="match status" value="1"/>
</dbReference>
<dbReference type="Pfam" id="PF00006">
    <property type="entry name" value="ATP-synt_ab"/>
    <property type="match status" value="1"/>
</dbReference>
<dbReference type="Pfam" id="PF02874">
    <property type="entry name" value="ATP-synt_ab_N"/>
    <property type="match status" value="1"/>
</dbReference>
<dbReference type="Pfam" id="PF22919">
    <property type="entry name" value="ATP-synt_VA_C"/>
    <property type="match status" value="1"/>
</dbReference>
<dbReference type="SMART" id="SM00382">
    <property type="entry name" value="AAA"/>
    <property type="match status" value="1"/>
</dbReference>
<dbReference type="SUPFAM" id="SSF47917">
    <property type="entry name" value="C-terminal domain of alpha and beta subunits of F1 ATP synthase"/>
    <property type="match status" value="1"/>
</dbReference>
<dbReference type="SUPFAM" id="SSF50615">
    <property type="entry name" value="N-terminal domain of alpha and beta subunits of F1 ATP synthase"/>
    <property type="match status" value="1"/>
</dbReference>
<dbReference type="SUPFAM" id="SSF52540">
    <property type="entry name" value="P-loop containing nucleoside triphosphate hydrolases"/>
    <property type="match status" value="1"/>
</dbReference>
<dbReference type="PROSITE" id="PS00152">
    <property type="entry name" value="ATPASE_ALPHA_BETA"/>
    <property type="match status" value="1"/>
</dbReference>
<gene>
    <name evidence="1" type="primary">atpB</name>
</gene>
<feature type="chain" id="PRO_0000254480" description="ATP synthase subunit beta, chloroplastic">
    <location>
        <begin position="1"/>
        <end position="498"/>
    </location>
</feature>
<feature type="binding site" evidence="1">
    <location>
        <begin position="172"/>
        <end position="179"/>
    </location>
    <ligand>
        <name>ATP</name>
        <dbReference type="ChEBI" id="CHEBI:30616"/>
    </ligand>
</feature>
<evidence type="ECO:0000255" key="1">
    <source>
        <dbReference type="HAMAP-Rule" id="MF_01347"/>
    </source>
</evidence>
<proteinExistence type="inferred from homology"/>
<keyword id="KW-0066">ATP synthesis</keyword>
<keyword id="KW-0067">ATP-binding</keyword>
<keyword id="KW-0139">CF(1)</keyword>
<keyword id="KW-0150">Chloroplast</keyword>
<keyword id="KW-0375">Hydrogen ion transport</keyword>
<keyword id="KW-0406">Ion transport</keyword>
<keyword id="KW-0472">Membrane</keyword>
<keyword id="KW-0547">Nucleotide-binding</keyword>
<keyword id="KW-0934">Plastid</keyword>
<keyword id="KW-0793">Thylakoid</keyword>
<keyword id="KW-1278">Translocase</keyword>
<keyword id="KW-0813">Transport</keyword>
<geneLocation type="chloroplast"/>
<name>ATPB_HELAN</name>